<reference key="1">
    <citation type="journal article" date="2009" name="J. Bacteriol.">
        <title>Complete genome sequence of the extremophilic Bacillus cereus strain Q1 with industrial applications.</title>
        <authorList>
            <person name="Xiong Z."/>
            <person name="Jiang Y."/>
            <person name="Qi D."/>
            <person name="Lu H."/>
            <person name="Yang F."/>
            <person name="Yang J."/>
            <person name="Chen L."/>
            <person name="Sun L."/>
            <person name="Xu X."/>
            <person name="Xue Y."/>
            <person name="Zhu Y."/>
            <person name="Jin Q."/>
        </authorList>
    </citation>
    <scope>NUCLEOTIDE SEQUENCE [LARGE SCALE GENOMIC DNA]</scope>
    <source>
        <strain>Q1</strain>
    </source>
</reference>
<evidence type="ECO:0000255" key="1">
    <source>
        <dbReference type="HAMAP-Rule" id="MF_01143"/>
    </source>
</evidence>
<feature type="chain" id="PRO_1000164105" description="Holin-like protein CidA">
    <location>
        <begin position="1"/>
        <end position="121"/>
    </location>
</feature>
<feature type="transmembrane region" description="Helical" evidence="1">
    <location>
        <begin position="3"/>
        <end position="23"/>
    </location>
</feature>
<feature type="transmembrane region" description="Helical" evidence="1">
    <location>
        <begin position="30"/>
        <end position="50"/>
    </location>
</feature>
<feature type="transmembrane region" description="Helical" evidence="1">
    <location>
        <begin position="58"/>
        <end position="78"/>
    </location>
</feature>
<feature type="transmembrane region" description="Helical" evidence="1">
    <location>
        <begin position="89"/>
        <end position="109"/>
    </location>
</feature>
<proteinExistence type="inferred from homology"/>
<name>CIDA_BACCQ</name>
<comment type="function">
    <text evidence="1">Increases the activity of extracellular murein hydrolases possibly by mediating their export via hole formation. Inhibited by the antiholin-like proteins LrgAB. In an unstressed cell, the LrgAB products probably inhibit the function of the CidA protein. When a cell is stressed by the addition of antibiotics or by other factors in the environment, CidA possibly oligomerizes within the bacterial cell membrane, creating lesions that disrupt the proton motive force, which in turn results in loss of cell viability. These lesions are also hypothesized to regulate the subsequent cell lysis by either allowing the murein hydrolases access to the cell wall substrate and/or regulating their activity by a possible change in the cell wall pH that results from loss of membrane potential.</text>
</comment>
<comment type="subcellular location">
    <subcellularLocation>
        <location evidence="1">Cell membrane</location>
        <topology evidence="1">Multi-pass membrane protein</topology>
    </subcellularLocation>
</comment>
<comment type="similarity">
    <text evidence="1">Belongs to the CidA/LrgA family. CidA subfamily.</text>
</comment>
<organism>
    <name type="scientific">Bacillus cereus (strain Q1)</name>
    <dbReference type="NCBI Taxonomy" id="361100"/>
    <lineage>
        <taxon>Bacteria</taxon>
        <taxon>Bacillati</taxon>
        <taxon>Bacillota</taxon>
        <taxon>Bacilli</taxon>
        <taxon>Bacillales</taxon>
        <taxon>Bacillaceae</taxon>
        <taxon>Bacillus</taxon>
        <taxon>Bacillus cereus group</taxon>
    </lineage>
</organism>
<sequence length="121" mass="13735">MKWWKLSGQILLLFCFAWTGEWIAKQAHLPVPGSIIGIFLLLISLKFNLVKKEWIQDGADFLLKELILFFIPSAVAVIRYKDTLSQYGIDLILIIMISTLCVTLVTGLLTELLLKRKGSVQ</sequence>
<gene>
    <name evidence="1" type="primary">cidA</name>
    <name type="ordered locus">BCQ_3472</name>
</gene>
<keyword id="KW-1003">Cell membrane</keyword>
<keyword id="KW-0204">Cytolysis</keyword>
<keyword id="KW-0472">Membrane</keyword>
<keyword id="KW-0812">Transmembrane</keyword>
<keyword id="KW-1133">Transmembrane helix</keyword>
<dbReference type="EMBL" id="CP000227">
    <property type="protein sequence ID" value="ACM13900.1"/>
    <property type="molecule type" value="Genomic_DNA"/>
</dbReference>
<dbReference type="SMR" id="B9IUJ0"/>
<dbReference type="KEGG" id="bcq:BCQ_3472"/>
<dbReference type="HOGENOM" id="CLU_113736_3_2_9"/>
<dbReference type="Proteomes" id="UP000000441">
    <property type="component" value="Chromosome"/>
</dbReference>
<dbReference type="GO" id="GO:0005886">
    <property type="term" value="C:plasma membrane"/>
    <property type="evidence" value="ECO:0007669"/>
    <property type="project" value="UniProtKB-SubCell"/>
</dbReference>
<dbReference type="GO" id="GO:0019835">
    <property type="term" value="P:cytolysis"/>
    <property type="evidence" value="ECO:0007669"/>
    <property type="project" value="UniProtKB-UniRule"/>
</dbReference>
<dbReference type="GO" id="GO:0031640">
    <property type="term" value="P:killing of cells of another organism"/>
    <property type="evidence" value="ECO:0007669"/>
    <property type="project" value="UniProtKB-KW"/>
</dbReference>
<dbReference type="GO" id="GO:0012501">
    <property type="term" value="P:programmed cell death"/>
    <property type="evidence" value="ECO:0007669"/>
    <property type="project" value="UniProtKB-UniRule"/>
</dbReference>
<dbReference type="HAMAP" id="MF_01143">
    <property type="entry name" value="CidA"/>
    <property type="match status" value="1"/>
</dbReference>
<dbReference type="InterPro" id="IPR023760">
    <property type="entry name" value="Holin-like_CidA"/>
</dbReference>
<dbReference type="InterPro" id="IPR005538">
    <property type="entry name" value="LrgA/CidA"/>
</dbReference>
<dbReference type="NCBIfam" id="NF002460">
    <property type="entry name" value="PRK01658.1"/>
    <property type="match status" value="1"/>
</dbReference>
<dbReference type="PANTHER" id="PTHR33931:SF2">
    <property type="entry name" value="HOLIN-LIKE PROTEIN CIDA"/>
    <property type="match status" value="1"/>
</dbReference>
<dbReference type="PANTHER" id="PTHR33931">
    <property type="entry name" value="HOLIN-LIKE PROTEIN CIDA-RELATED"/>
    <property type="match status" value="1"/>
</dbReference>
<dbReference type="Pfam" id="PF03788">
    <property type="entry name" value="LrgA"/>
    <property type="match status" value="1"/>
</dbReference>
<accession>B9IUJ0</accession>
<protein>
    <recommendedName>
        <fullName evidence="1">Holin-like protein CidA</fullName>
    </recommendedName>
</protein>